<evidence type="ECO:0000255" key="1">
    <source>
        <dbReference type="HAMAP-Rule" id="MF_00460"/>
    </source>
</evidence>
<name>RNFH_ECO45</name>
<comment type="similarity">
    <text evidence="1">Belongs to the UPF0125 (RnfH) family.</text>
</comment>
<protein>
    <recommendedName>
        <fullName evidence="1">Protein RnfH</fullName>
    </recommendedName>
</protein>
<keyword id="KW-1185">Reference proteome</keyword>
<proteinExistence type="inferred from homology"/>
<accession>B7MIV5</accession>
<organism>
    <name type="scientific">Escherichia coli O45:K1 (strain S88 / ExPEC)</name>
    <dbReference type="NCBI Taxonomy" id="585035"/>
    <lineage>
        <taxon>Bacteria</taxon>
        <taxon>Pseudomonadati</taxon>
        <taxon>Pseudomonadota</taxon>
        <taxon>Gammaproteobacteria</taxon>
        <taxon>Enterobacterales</taxon>
        <taxon>Enterobacteriaceae</taxon>
        <taxon>Escherichia</taxon>
    </lineage>
</organism>
<feature type="chain" id="PRO_1000200180" description="Protein RnfH">
    <location>
        <begin position="1"/>
        <end position="96"/>
    </location>
</feature>
<dbReference type="EMBL" id="CU928161">
    <property type="protein sequence ID" value="CAR04057.1"/>
    <property type="molecule type" value="Genomic_DNA"/>
</dbReference>
<dbReference type="RefSeq" id="WP_001117834.1">
    <property type="nucleotide sequence ID" value="NC_011742.1"/>
</dbReference>
<dbReference type="SMR" id="B7MIV5"/>
<dbReference type="KEGG" id="ecz:ECS88_2804"/>
<dbReference type="HOGENOM" id="CLU_150721_1_0_6"/>
<dbReference type="Proteomes" id="UP000000747">
    <property type="component" value="Chromosome"/>
</dbReference>
<dbReference type="Gene3D" id="3.10.20.280">
    <property type="entry name" value="RnfH-like"/>
    <property type="match status" value="1"/>
</dbReference>
<dbReference type="HAMAP" id="MF_00460">
    <property type="entry name" value="UPF0125_RnfH"/>
    <property type="match status" value="1"/>
</dbReference>
<dbReference type="InterPro" id="IPR016155">
    <property type="entry name" value="Mopterin_synth/thiamin_S_b"/>
</dbReference>
<dbReference type="InterPro" id="IPR005346">
    <property type="entry name" value="RnfH"/>
</dbReference>
<dbReference type="InterPro" id="IPR037021">
    <property type="entry name" value="RnfH_sf"/>
</dbReference>
<dbReference type="NCBIfam" id="NF002490">
    <property type="entry name" value="PRK01777.1"/>
    <property type="match status" value="1"/>
</dbReference>
<dbReference type="PANTHER" id="PTHR37483">
    <property type="entry name" value="UPF0125 PROTEIN RATB"/>
    <property type="match status" value="1"/>
</dbReference>
<dbReference type="PANTHER" id="PTHR37483:SF1">
    <property type="entry name" value="UPF0125 PROTEIN RATB"/>
    <property type="match status" value="1"/>
</dbReference>
<dbReference type="Pfam" id="PF03658">
    <property type="entry name" value="Ub-RnfH"/>
    <property type="match status" value="1"/>
</dbReference>
<dbReference type="SUPFAM" id="SSF54285">
    <property type="entry name" value="MoaD/ThiS"/>
    <property type="match status" value="1"/>
</dbReference>
<reference key="1">
    <citation type="journal article" date="2009" name="PLoS Genet.">
        <title>Organised genome dynamics in the Escherichia coli species results in highly diverse adaptive paths.</title>
        <authorList>
            <person name="Touchon M."/>
            <person name="Hoede C."/>
            <person name="Tenaillon O."/>
            <person name="Barbe V."/>
            <person name="Baeriswyl S."/>
            <person name="Bidet P."/>
            <person name="Bingen E."/>
            <person name="Bonacorsi S."/>
            <person name="Bouchier C."/>
            <person name="Bouvet O."/>
            <person name="Calteau A."/>
            <person name="Chiapello H."/>
            <person name="Clermont O."/>
            <person name="Cruveiller S."/>
            <person name="Danchin A."/>
            <person name="Diard M."/>
            <person name="Dossat C."/>
            <person name="Karoui M.E."/>
            <person name="Frapy E."/>
            <person name="Garry L."/>
            <person name="Ghigo J.M."/>
            <person name="Gilles A.M."/>
            <person name="Johnson J."/>
            <person name="Le Bouguenec C."/>
            <person name="Lescat M."/>
            <person name="Mangenot S."/>
            <person name="Martinez-Jehanne V."/>
            <person name="Matic I."/>
            <person name="Nassif X."/>
            <person name="Oztas S."/>
            <person name="Petit M.A."/>
            <person name="Pichon C."/>
            <person name="Rouy Z."/>
            <person name="Ruf C.S."/>
            <person name="Schneider D."/>
            <person name="Tourret J."/>
            <person name="Vacherie B."/>
            <person name="Vallenet D."/>
            <person name="Medigue C."/>
            <person name="Rocha E.P.C."/>
            <person name="Denamur E."/>
        </authorList>
    </citation>
    <scope>NUCLEOTIDE SEQUENCE [LARGE SCALE GENOMIC DNA]</scope>
    <source>
        <strain>S88 / ExPEC</strain>
    </source>
</reference>
<sequence length="96" mass="10815">MPGKIAVEVAYALPEKQYLQRVTLQEGATVEEAIRASGLLELRTDIDLTKNKVGIYSRPAKLSDIVHDGDRVEIYRPLIADPKELRRQRAEKSANK</sequence>
<gene>
    <name evidence="1" type="primary">rnfH</name>
    <name type="ordered locus">ECS88_2804</name>
</gene>